<proteinExistence type="evidence at transcript level"/>
<organism>
    <name type="scientific">Xenopus tropicalis</name>
    <name type="common">Western clawed frog</name>
    <name type="synonym">Silurana tropicalis</name>
    <dbReference type="NCBI Taxonomy" id="8364"/>
    <lineage>
        <taxon>Eukaryota</taxon>
        <taxon>Metazoa</taxon>
        <taxon>Chordata</taxon>
        <taxon>Craniata</taxon>
        <taxon>Vertebrata</taxon>
        <taxon>Euteleostomi</taxon>
        <taxon>Amphibia</taxon>
        <taxon>Batrachia</taxon>
        <taxon>Anura</taxon>
        <taxon>Pipoidea</taxon>
        <taxon>Pipidae</taxon>
        <taxon>Xenopodinae</taxon>
        <taxon>Xenopus</taxon>
        <taxon>Silurana</taxon>
    </lineage>
</organism>
<evidence type="ECO:0000255" key="1"/>
<evidence type="ECO:0000305" key="2"/>
<protein>
    <recommendedName>
        <fullName>Uncharacterized protein KIAA2013 homolog</fullName>
    </recommendedName>
</protein>
<dbReference type="EMBL" id="BC135420">
    <property type="protein sequence ID" value="AAI35421.1"/>
    <property type="molecule type" value="mRNA"/>
</dbReference>
<dbReference type="RefSeq" id="NP_001096252.1">
    <property type="nucleotide sequence ID" value="NM_001102782.1"/>
</dbReference>
<dbReference type="FunCoup" id="A4IH88">
    <property type="interactions" value="1237"/>
</dbReference>
<dbReference type="STRING" id="8364.ENSXETP00000043452"/>
<dbReference type="PaxDb" id="8364-ENSXETP00000060618"/>
<dbReference type="DNASU" id="100124813"/>
<dbReference type="GeneID" id="100124813"/>
<dbReference type="KEGG" id="xtr:100124813"/>
<dbReference type="AGR" id="Xenbase:XB-GENE-955403"/>
<dbReference type="CTD" id="90231"/>
<dbReference type="Xenbase" id="XB-GENE-955403">
    <property type="gene designation" value="KIAA2013"/>
</dbReference>
<dbReference type="eggNOG" id="KOG3778">
    <property type="taxonomic scope" value="Eukaryota"/>
</dbReference>
<dbReference type="InParanoid" id="A4IH88"/>
<dbReference type="OMA" id="LAEIHRW"/>
<dbReference type="OrthoDB" id="10017443at2759"/>
<dbReference type="Proteomes" id="UP000008143">
    <property type="component" value="Chromosome 7"/>
</dbReference>
<dbReference type="GO" id="GO:0016020">
    <property type="term" value="C:membrane"/>
    <property type="evidence" value="ECO:0007669"/>
    <property type="project" value="UniProtKB-SubCell"/>
</dbReference>
<dbReference type="InterPro" id="IPR018795">
    <property type="entry name" value="K2013-like"/>
</dbReference>
<dbReference type="PANTHER" id="PTHR31386:SF2">
    <property type="entry name" value="SIMILAR TO RIKEN CDNA 2510039O18"/>
    <property type="match status" value="1"/>
</dbReference>
<dbReference type="PANTHER" id="PTHR31386">
    <property type="entry name" value="UNCHARACTERIZED PROTEIN KIAA2013"/>
    <property type="match status" value="1"/>
</dbReference>
<dbReference type="Pfam" id="PF10222">
    <property type="entry name" value="DUF2152"/>
    <property type="match status" value="1"/>
</dbReference>
<comment type="subcellular location">
    <subcellularLocation>
        <location evidence="2">Membrane</location>
        <topology evidence="2">Single-pass type I membrane protein</topology>
    </subcellularLocation>
</comment>
<accession>A4IH88</accession>
<sequence length="608" mass="68996">MWLQQRLKVFPGLLSSSWARRVLAVSGFLVIIYWYIFSGSLFRSFWYAGPPRGISGACLHGQTMQWKALAEKGDVVMVSFPGEETKMQGPTMVGNGHIIVDVGKNNLWVSSLSVLFHLTNYSPLTFVKSVGALAETHATAIFFKEGLIRTIRCLQMEASDSSHDCVTVREDHFAHRSRPHVYVQKIHIANPSDRVVTFDISSQKPLTGETFTTSVEKVQERQFLLSSGRVSVEDGKIILVVVATKKLVSRLQVSPKSDYDETVFSVVYASEPIDPGKVSDTFSKLRESAKKEMFELMHMKTEDLFHEHQQIWSDLFVSGIEMKKIKDLHTPSRDTINITLYYMLSCSLAPLVDPILSNEERDKMESFLNYADHCFTGHSTMHAENLWPSSLSGITQLLQLWDLWKLTLQKRGCKSLVSAGAHGLMQGMLLSFGGLQFTENHLQFQSDPHVLHNSYSLRGVHYNKDLINLAVLLDKDEKPFLHVSVKFQDKLVKLYACEAGCLNEPVELTSEIRGHIFPVLVTQPLTPLLYISTDLTHLQDLRHTLHLKEILAHEEHMAKQYRGLPFLFWFSVASLITLFHLFLFKLIYNEYCGPGAKPLFRSKEDTSV</sequence>
<name>K2013_XENTR</name>
<keyword id="KW-0325">Glycoprotein</keyword>
<keyword id="KW-0472">Membrane</keyword>
<keyword id="KW-1185">Reference proteome</keyword>
<keyword id="KW-0732">Signal</keyword>
<keyword id="KW-0812">Transmembrane</keyword>
<keyword id="KW-1133">Transmembrane helix</keyword>
<feature type="signal peptide" evidence="1">
    <location>
        <begin position="1"/>
        <end position="38"/>
    </location>
</feature>
<feature type="chain" id="PRO_0000293471" description="Uncharacterized protein KIAA2013 homolog">
    <location>
        <begin position="39"/>
        <end position="608"/>
    </location>
</feature>
<feature type="topological domain" description="Extracellular" evidence="1">
    <location>
        <begin position="39"/>
        <end position="563"/>
    </location>
</feature>
<feature type="transmembrane region" description="Helical" evidence="1">
    <location>
        <begin position="564"/>
        <end position="584"/>
    </location>
</feature>
<feature type="topological domain" description="Cytoplasmic" evidence="1">
    <location>
        <begin position="585"/>
        <end position="608"/>
    </location>
</feature>
<feature type="glycosylation site" description="N-linked (GlcNAc...) asparagine" evidence="1">
    <location>
        <position position="337"/>
    </location>
</feature>
<reference key="1">
    <citation type="submission" date="2007-03" db="EMBL/GenBank/DDBJ databases">
        <authorList>
            <consortium name="NIH - Xenopus Gene Collection (XGC) project"/>
        </authorList>
    </citation>
    <scope>NUCLEOTIDE SEQUENCE [LARGE SCALE MRNA]</scope>
    <source>
        <tissue>Tadpole</tissue>
    </source>
</reference>